<accession>B8ZRK9</accession>
<name>ARLY_MYCLB</name>
<gene>
    <name evidence="1" type="primary">argH</name>
    <name type="ordered locus">MLBr01413</name>
</gene>
<sequence length="470" mass="49937">MSTNQGSLWGGRFAAGPSEALVALSKSTHFDWVLAPYDITASRAHTKMLFRAGLLNEEQRDGLLAGLDNLAEDVADGSFLPLVTDEDVHAALERGLIDRVGPDLGGRLRAGRSRNDQVATLFRMWLRDAVRRVAAGALEVVDALANQAAEHSSTIMPGKTHLQSAQPILLAHHLLAHAHPLLRDVGRIVDFDKRAAVSPYGSGALAGSSLGLDPDAMAQDLGFPAAADNSVDATAARDFAAEAAFVFAMIAVDLSRLAEDIILWSSTEFGYARLHDSWSTGSSIMPQKKNPDIAELARGKSGRLIGNLAGLLATLKAQPLAYNRDLQEDKEPVFDSVAQLELLLPAMAGLVASLTFNVERMAALAPAGYTLATDIAEWLVRQGVPFRSAHEAAGTAVRVAEGRGVGLEELTDDELAAISANLTPQVREVLTVEGSVSSRAARGGTAPSQAAKQLTVVRANANQLRQLLMR</sequence>
<protein>
    <recommendedName>
        <fullName evidence="1">Argininosuccinate lyase</fullName>
        <shortName evidence="1">ASAL</shortName>
        <ecNumber evidence="1">4.3.2.1</ecNumber>
    </recommendedName>
    <alternativeName>
        <fullName evidence="1">Arginosuccinase</fullName>
    </alternativeName>
</protein>
<keyword id="KW-0028">Amino-acid biosynthesis</keyword>
<keyword id="KW-0055">Arginine biosynthesis</keyword>
<keyword id="KW-0963">Cytoplasm</keyword>
<keyword id="KW-0456">Lyase</keyword>
<feature type="chain" id="PRO_1000116336" description="Argininosuccinate lyase">
    <location>
        <begin position="1"/>
        <end position="470"/>
    </location>
</feature>
<organism>
    <name type="scientific">Mycobacterium leprae (strain Br4923)</name>
    <dbReference type="NCBI Taxonomy" id="561304"/>
    <lineage>
        <taxon>Bacteria</taxon>
        <taxon>Bacillati</taxon>
        <taxon>Actinomycetota</taxon>
        <taxon>Actinomycetes</taxon>
        <taxon>Mycobacteriales</taxon>
        <taxon>Mycobacteriaceae</taxon>
        <taxon>Mycobacterium</taxon>
    </lineage>
</organism>
<reference key="1">
    <citation type="journal article" date="2009" name="Nat. Genet.">
        <title>Comparative genomic and phylogeographic analysis of Mycobacterium leprae.</title>
        <authorList>
            <person name="Monot M."/>
            <person name="Honore N."/>
            <person name="Garnier T."/>
            <person name="Zidane N."/>
            <person name="Sherafi D."/>
            <person name="Paniz-Mondolfi A."/>
            <person name="Matsuoka M."/>
            <person name="Taylor G.M."/>
            <person name="Donoghue H.D."/>
            <person name="Bouwman A."/>
            <person name="Mays S."/>
            <person name="Watson C."/>
            <person name="Lockwood D."/>
            <person name="Khamispour A."/>
            <person name="Dowlati Y."/>
            <person name="Jianping S."/>
            <person name="Rea T.H."/>
            <person name="Vera-Cabrera L."/>
            <person name="Stefani M.M."/>
            <person name="Banu S."/>
            <person name="Macdonald M."/>
            <person name="Sapkota B.R."/>
            <person name="Spencer J.S."/>
            <person name="Thomas J."/>
            <person name="Harshman K."/>
            <person name="Singh P."/>
            <person name="Busso P."/>
            <person name="Gattiker A."/>
            <person name="Rougemont J."/>
            <person name="Brennan P.J."/>
            <person name="Cole S.T."/>
        </authorList>
    </citation>
    <scope>NUCLEOTIDE SEQUENCE [LARGE SCALE GENOMIC DNA]</scope>
    <source>
        <strain>Br4923</strain>
    </source>
</reference>
<dbReference type="EC" id="4.3.2.1" evidence="1"/>
<dbReference type="EMBL" id="FM211192">
    <property type="protein sequence ID" value="CAR71508.1"/>
    <property type="molecule type" value="Genomic_DNA"/>
</dbReference>
<dbReference type="SMR" id="B8ZRK9"/>
<dbReference type="KEGG" id="mlb:MLBr01413"/>
<dbReference type="HOGENOM" id="CLU_027272_2_2_11"/>
<dbReference type="UniPathway" id="UPA00068">
    <property type="reaction ID" value="UER00114"/>
</dbReference>
<dbReference type="Proteomes" id="UP000006900">
    <property type="component" value="Chromosome"/>
</dbReference>
<dbReference type="GO" id="GO:0005829">
    <property type="term" value="C:cytosol"/>
    <property type="evidence" value="ECO:0007669"/>
    <property type="project" value="TreeGrafter"/>
</dbReference>
<dbReference type="GO" id="GO:0004056">
    <property type="term" value="F:argininosuccinate lyase activity"/>
    <property type="evidence" value="ECO:0007669"/>
    <property type="project" value="UniProtKB-UniRule"/>
</dbReference>
<dbReference type="GO" id="GO:0042450">
    <property type="term" value="P:arginine biosynthetic process via ornithine"/>
    <property type="evidence" value="ECO:0007669"/>
    <property type="project" value="InterPro"/>
</dbReference>
<dbReference type="GO" id="GO:0006526">
    <property type="term" value="P:L-arginine biosynthetic process"/>
    <property type="evidence" value="ECO:0007669"/>
    <property type="project" value="UniProtKB-UniRule"/>
</dbReference>
<dbReference type="CDD" id="cd01359">
    <property type="entry name" value="Argininosuccinate_lyase"/>
    <property type="match status" value="1"/>
</dbReference>
<dbReference type="FunFam" id="1.10.40.30:FF:000001">
    <property type="entry name" value="Argininosuccinate lyase"/>
    <property type="match status" value="1"/>
</dbReference>
<dbReference type="FunFam" id="1.20.200.10:FF:000015">
    <property type="entry name" value="argininosuccinate lyase isoform X2"/>
    <property type="match status" value="1"/>
</dbReference>
<dbReference type="Gene3D" id="1.10.40.30">
    <property type="entry name" value="Fumarase/aspartase (C-terminal domain)"/>
    <property type="match status" value="1"/>
</dbReference>
<dbReference type="Gene3D" id="1.20.200.10">
    <property type="entry name" value="Fumarase/aspartase (Central domain)"/>
    <property type="match status" value="1"/>
</dbReference>
<dbReference type="Gene3D" id="1.10.275.10">
    <property type="entry name" value="Fumarase/aspartase (N-terminal domain)"/>
    <property type="match status" value="1"/>
</dbReference>
<dbReference type="HAMAP" id="MF_00006">
    <property type="entry name" value="Arg_succ_lyase"/>
    <property type="match status" value="1"/>
</dbReference>
<dbReference type="InterPro" id="IPR029419">
    <property type="entry name" value="Arg_succ_lyase_C"/>
</dbReference>
<dbReference type="InterPro" id="IPR009049">
    <property type="entry name" value="Argininosuccinate_lyase"/>
</dbReference>
<dbReference type="InterPro" id="IPR024083">
    <property type="entry name" value="Fumarase/histidase_N"/>
</dbReference>
<dbReference type="InterPro" id="IPR020557">
    <property type="entry name" value="Fumarate_lyase_CS"/>
</dbReference>
<dbReference type="InterPro" id="IPR000362">
    <property type="entry name" value="Fumarate_lyase_fam"/>
</dbReference>
<dbReference type="InterPro" id="IPR022761">
    <property type="entry name" value="Fumarate_lyase_N"/>
</dbReference>
<dbReference type="InterPro" id="IPR008948">
    <property type="entry name" value="L-Aspartase-like"/>
</dbReference>
<dbReference type="NCBIfam" id="TIGR00838">
    <property type="entry name" value="argH"/>
    <property type="match status" value="1"/>
</dbReference>
<dbReference type="PANTHER" id="PTHR43814">
    <property type="entry name" value="ARGININOSUCCINATE LYASE"/>
    <property type="match status" value="1"/>
</dbReference>
<dbReference type="PANTHER" id="PTHR43814:SF1">
    <property type="entry name" value="ARGININOSUCCINATE LYASE"/>
    <property type="match status" value="1"/>
</dbReference>
<dbReference type="Pfam" id="PF14698">
    <property type="entry name" value="ASL_C2"/>
    <property type="match status" value="1"/>
</dbReference>
<dbReference type="Pfam" id="PF00206">
    <property type="entry name" value="Lyase_1"/>
    <property type="match status" value="1"/>
</dbReference>
<dbReference type="PRINTS" id="PR00145">
    <property type="entry name" value="ARGSUCLYASE"/>
</dbReference>
<dbReference type="PRINTS" id="PR00149">
    <property type="entry name" value="FUMRATELYASE"/>
</dbReference>
<dbReference type="SUPFAM" id="SSF48557">
    <property type="entry name" value="L-aspartase-like"/>
    <property type="match status" value="1"/>
</dbReference>
<dbReference type="PROSITE" id="PS00163">
    <property type="entry name" value="FUMARATE_LYASES"/>
    <property type="match status" value="1"/>
</dbReference>
<evidence type="ECO:0000255" key="1">
    <source>
        <dbReference type="HAMAP-Rule" id="MF_00006"/>
    </source>
</evidence>
<proteinExistence type="inferred from homology"/>
<comment type="catalytic activity">
    <reaction evidence="1">
        <text>2-(N(omega)-L-arginino)succinate = fumarate + L-arginine</text>
        <dbReference type="Rhea" id="RHEA:24020"/>
        <dbReference type="ChEBI" id="CHEBI:29806"/>
        <dbReference type="ChEBI" id="CHEBI:32682"/>
        <dbReference type="ChEBI" id="CHEBI:57472"/>
        <dbReference type="EC" id="4.3.2.1"/>
    </reaction>
</comment>
<comment type="pathway">
    <text evidence="1">Amino-acid biosynthesis; L-arginine biosynthesis; L-arginine from L-ornithine and carbamoyl phosphate: step 3/3.</text>
</comment>
<comment type="subcellular location">
    <subcellularLocation>
        <location evidence="1">Cytoplasm</location>
    </subcellularLocation>
</comment>
<comment type="similarity">
    <text evidence="1">Belongs to the lyase 1 family. Argininosuccinate lyase subfamily.</text>
</comment>